<keyword id="KW-0030">Aminoacyl-tRNA synthetase</keyword>
<keyword id="KW-0067">ATP-binding</keyword>
<keyword id="KW-0963">Cytoplasm</keyword>
<keyword id="KW-0436">Ligase</keyword>
<keyword id="KW-0547">Nucleotide-binding</keyword>
<keyword id="KW-0648">Protein biosynthesis</keyword>
<keyword id="KW-1185">Reference proteome</keyword>
<feature type="chain" id="PRO_1000185506" description="Proline--tRNA ligase">
    <location>
        <begin position="1"/>
        <end position="568"/>
    </location>
</feature>
<proteinExistence type="inferred from homology"/>
<comment type="function">
    <text evidence="1">Catalyzes the attachment of proline to tRNA(Pro) in a two-step reaction: proline is first activated by ATP to form Pro-AMP and then transferred to the acceptor end of tRNA(Pro). As ProRS can inadvertently accommodate and process non-cognate amino acids such as alanine and cysteine, to avoid such errors it has two additional distinct editing activities against alanine. One activity is designated as 'pretransfer' editing and involves the tRNA(Pro)-independent hydrolysis of activated Ala-AMP. The other activity is designated 'posttransfer' editing and involves deacylation of mischarged Ala-tRNA(Pro). The misacylated Cys-tRNA(Pro) is not edited by ProRS.</text>
</comment>
<comment type="catalytic activity">
    <reaction evidence="1">
        <text>tRNA(Pro) + L-proline + ATP = L-prolyl-tRNA(Pro) + AMP + diphosphate</text>
        <dbReference type="Rhea" id="RHEA:14305"/>
        <dbReference type="Rhea" id="RHEA-COMP:9700"/>
        <dbReference type="Rhea" id="RHEA-COMP:9702"/>
        <dbReference type="ChEBI" id="CHEBI:30616"/>
        <dbReference type="ChEBI" id="CHEBI:33019"/>
        <dbReference type="ChEBI" id="CHEBI:60039"/>
        <dbReference type="ChEBI" id="CHEBI:78442"/>
        <dbReference type="ChEBI" id="CHEBI:78532"/>
        <dbReference type="ChEBI" id="CHEBI:456215"/>
        <dbReference type="EC" id="6.1.1.15"/>
    </reaction>
</comment>
<comment type="subunit">
    <text evidence="1">Homodimer.</text>
</comment>
<comment type="subcellular location">
    <subcellularLocation>
        <location evidence="1">Cytoplasm</location>
    </subcellularLocation>
</comment>
<comment type="domain">
    <text evidence="1">Consists of three domains: the N-terminal catalytic domain, the editing domain and the C-terminal anticodon-binding domain.</text>
</comment>
<comment type="similarity">
    <text evidence="1">Belongs to the class-II aminoacyl-tRNA synthetase family. ProS type 1 subfamily.</text>
</comment>
<name>SYP_MACCJ</name>
<gene>
    <name evidence="1" type="primary">proS</name>
    <name type="ordered locus">MCCL_0848</name>
</gene>
<dbReference type="EC" id="6.1.1.15" evidence="1"/>
<dbReference type="EMBL" id="AP009484">
    <property type="protein sequence ID" value="BAH17555.1"/>
    <property type="molecule type" value="Genomic_DNA"/>
</dbReference>
<dbReference type="RefSeq" id="WP_012656755.1">
    <property type="nucleotide sequence ID" value="NC_011999.1"/>
</dbReference>
<dbReference type="SMR" id="B9EBE4"/>
<dbReference type="STRING" id="458233.MCCL_0848"/>
<dbReference type="KEGG" id="mcl:MCCL_0848"/>
<dbReference type="eggNOG" id="COG0442">
    <property type="taxonomic scope" value="Bacteria"/>
</dbReference>
<dbReference type="HOGENOM" id="CLU_016739_0_0_9"/>
<dbReference type="OrthoDB" id="9809052at2"/>
<dbReference type="Proteomes" id="UP000001383">
    <property type="component" value="Chromosome"/>
</dbReference>
<dbReference type="GO" id="GO:0005829">
    <property type="term" value="C:cytosol"/>
    <property type="evidence" value="ECO:0007669"/>
    <property type="project" value="TreeGrafter"/>
</dbReference>
<dbReference type="GO" id="GO:0002161">
    <property type="term" value="F:aminoacyl-tRNA deacylase activity"/>
    <property type="evidence" value="ECO:0007669"/>
    <property type="project" value="InterPro"/>
</dbReference>
<dbReference type="GO" id="GO:0005524">
    <property type="term" value="F:ATP binding"/>
    <property type="evidence" value="ECO:0007669"/>
    <property type="project" value="UniProtKB-UniRule"/>
</dbReference>
<dbReference type="GO" id="GO:0140096">
    <property type="term" value="F:catalytic activity, acting on a protein"/>
    <property type="evidence" value="ECO:0007669"/>
    <property type="project" value="UniProtKB-ARBA"/>
</dbReference>
<dbReference type="GO" id="GO:0004827">
    <property type="term" value="F:proline-tRNA ligase activity"/>
    <property type="evidence" value="ECO:0007669"/>
    <property type="project" value="UniProtKB-UniRule"/>
</dbReference>
<dbReference type="GO" id="GO:0016740">
    <property type="term" value="F:transferase activity"/>
    <property type="evidence" value="ECO:0007669"/>
    <property type="project" value="UniProtKB-ARBA"/>
</dbReference>
<dbReference type="GO" id="GO:0006433">
    <property type="term" value="P:prolyl-tRNA aminoacylation"/>
    <property type="evidence" value="ECO:0007669"/>
    <property type="project" value="UniProtKB-UniRule"/>
</dbReference>
<dbReference type="CDD" id="cd04334">
    <property type="entry name" value="ProRS-INS"/>
    <property type="match status" value="1"/>
</dbReference>
<dbReference type="CDD" id="cd00861">
    <property type="entry name" value="ProRS_anticodon_short"/>
    <property type="match status" value="1"/>
</dbReference>
<dbReference type="CDD" id="cd00779">
    <property type="entry name" value="ProRS_core_prok"/>
    <property type="match status" value="1"/>
</dbReference>
<dbReference type="FunFam" id="3.30.930.10:FF:000043">
    <property type="entry name" value="Proline--tRNA ligase"/>
    <property type="match status" value="1"/>
</dbReference>
<dbReference type="FunFam" id="3.40.50.800:FF:000011">
    <property type="entry name" value="Proline--tRNA ligase"/>
    <property type="match status" value="1"/>
</dbReference>
<dbReference type="Gene3D" id="3.40.50.800">
    <property type="entry name" value="Anticodon-binding domain"/>
    <property type="match status" value="1"/>
</dbReference>
<dbReference type="Gene3D" id="3.30.930.10">
    <property type="entry name" value="Bira Bifunctional Protein, Domain 2"/>
    <property type="match status" value="2"/>
</dbReference>
<dbReference type="HAMAP" id="MF_01569">
    <property type="entry name" value="Pro_tRNA_synth_type1"/>
    <property type="match status" value="1"/>
</dbReference>
<dbReference type="InterPro" id="IPR002314">
    <property type="entry name" value="aa-tRNA-synt_IIb"/>
</dbReference>
<dbReference type="InterPro" id="IPR006195">
    <property type="entry name" value="aa-tRNA-synth_II"/>
</dbReference>
<dbReference type="InterPro" id="IPR045864">
    <property type="entry name" value="aa-tRNA-synth_II/BPL/LPL"/>
</dbReference>
<dbReference type="InterPro" id="IPR004154">
    <property type="entry name" value="Anticodon-bd"/>
</dbReference>
<dbReference type="InterPro" id="IPR036621">
    <property type="entry name" value="Anticodon-bd_dom_sf"/>
</dbReference>
<dbReference type="InterPro" id="IPR002316">
    <property type="entry name" value="Pro-tRNA-ligase_IIa"/>
</dbReference>
<dbReference type="InterPro" id="IPR004500">
    <property type="entry name" value="Pro-tRNA-synth_IIa_bac-type"/>
</dbReference>
<dbReference type="InterPro" id="IPR023717">
    <property type="entry name" value="Pro-tRNA-Synthase_IIa_type1"/>
</dbReference>
<dbReference type="InterPro" id="IPR050062">
    <property type="entry name" value="Pro-tRNA_synthetase"/>
</dbReference>
<dbReference type="InterPro" id="IPR044140">
    <property type="entry name" value="ProRS_anticodon_short"/>
</dbReference>
<dbReference type="InterPro" id="IPR033730">
    <property type="entry name" value="ProRS_core_prok"/>
</dbReference>
<dbReference type="InterPro" id="IPR036754">
    <property type="entry name" value="YbaK/aa-tRNA-synt-asso_dom_sf"/>
</dbReference>
<dbReference type="InterPro" id="IPR007214">
    <property type="entry name" value="YbaK/aa-tRNA-synth-assoc-dom"/>
</dbReference>
<dbReference type="NCBIfam" id="NF006625">
    <property type="entry name" value="PRK09194.1"/>
    <property type="match status" value="1"/>
</dbReference>
<dbReference type="NCBIfam" id="TIGR00409">
    <property type="entry name" value="proS_fam_II"/>
    <property type="match status" value="1"/>
</dbReference>
<dbReference type="PANTHER" id="PTHR42753">
    <property type="entry name" value="MITOCHONDRIAL RIBOSOME PROTEIN L39/PROLYL-TRNA LIGASE FAMILY MEMBER"/>
    <property type="match status" value="1"/>
</dbReference>
<dbReference type="PANTHER" id="PTHR42753:SF2">
    <property type="entry name" value="PROLINE--TRNA LIGASE"/>
    <property type="match status" value="1"/>
</dbReference>
<dbReference type="Pfam" id="PF03129">
    <property type="entry name" value="HGTP_anticodon"/>
    <property type="match status" value="1"/>
</dbReference>
<dbReference type="Pfam" id="PF00587">
    <property type="entry name" value="tRNA-synt_2b"/>
    <property type="match status" value="1"/>
</dbReference>
<dbReference type="Pfam" id="PF04073">
    <property type="entry name" value="tRNA_edit"/>
    <property type="match status" value="1"/>
</dbReference>
<dbReference type="PRINTS" id="PR01046">
    <property type="entry name" value="TRNASYNTHPRO"/>
</dbReference>
<dbReference type="SUPFAM" id="SSF52954">
    <property type="entry name" value="Class II aaRS ABD-related"/>
    <property type="match status" value="1"/>
</dbReference>
<dbReference type="SUPFAM" id="SSF55681">
    <property type="entry name" value="Class II aaRS and biotin synthetases"/>
    <property type="match status" value="1"/>
</dbReference>
<dbReference type="SUPFAM" id="SSF55826">
    <property type="entry name" value="YbaK/ProRS associated domain"/>
    <property type="match status" value="1"/>
</dbReference>
<dbReference type="PROSITE" id="PS50862">
    <property type="entry name" value="AA_TRNA_LIGASE_II"/>
    <property type="match status" value="1"/>
</dbReference>
<accession>B9EBE4</accession>
<evidence type="ECO:0000255" key="1">
    <source>
        <dbReference type="HAMAP-Rule" id="MF_01569"/>
    </source>
</evidence>
<organism>
    <name type="scientific">Macrococcus caseolyticus (strain JCSC5402)</name>
    <name type="common">Macrococcoides caseolyticum</name>
    <dbReference type="NCBI Taxonomy" id="458233"/>
    <lineage>
        <taxon>Bacteria</taxon>
        <taxon>Bacillati</taxon>
        <taxon>Bacillota</taxon>
        <taxon>Bacilli</taxon>
        <taxon>Bacillales</taxon>
        <taxon>Staphylococcaceae</taxon>
        <taxon>Macrococcoides</taxon>
    </lineage>
</organism>
<reference key="1">
    <citation type="journal article" date="2009" name="J. Bacteriol.">
        <title>Complete genome sequence of Macrococcus caseolyticus strain JCSCS5402, reflecting the ancestral genome of the human-pathogenic staphylococci.</title>
        <authorList>
            <person name="Baba T."/>
            <person name="Kuwahara-Arai K."/>
            <person name="Uchiyama I."/>
            <person name="Takeuchi F."/>
            <person name="Ito T."/>
            <person name="Hiramatsu K."/>
        </authorList>
    </citation>
    <scope>NUCLEOTIDE SEQUENCE [LARGE SCALE GENOMIC DNA]</scope>
    <source>
        <strain>JCSC5402</strain>
    </source>
</reference>
<sequence>MKQSKMFIPTLREVPSDADSKSHQLLLKAGMIKQVASGVYSYLPIAKRVLNKIESIVREEMEAIDGVEILMPALQPSELWSESGRWQSYGAELMRMTDRHGREFALGPTHEEIITSLVRDELKSYKKLPVTLFQIQNKFRDEKRPRFGLLRGREFIMKDAYSFHATEASLDETYQDMYNAYSKIFSRLNLQFRPVIADSGAIGGSHTHEFMALAEIGEDTICYTDGSDYAANIEKAEVVYHPNKKHTEENVLEKVHTPGVKTAQQLADFLKRDLDEIVKSMIVKVDDQFVMFLIRGHHELNDIKVKSFFGTEHVEMATDDDIRSILDASPGSLGPVGVNKIDIYADNSVQDLNNLAVGANEDDYHYVNANVDRDFNVKAYGDFRFILEGEPAADGSGPVKFAEGIEIGQVFKLGTKYSESMNATFLNDQGRAEPMIMGCYGIGVSRTLSAVIEQHNDDKGIIWPTAITPYEVHIISVNPKQEVQKNLADQLYDTYRTQYEVLYDDRAERAGVKFNDADLIGIPVRVVVGKQAADGIVEVKNRRTGDAVEVHIDNLQETIQSIYASFES</sequence>
<protein>
    <recommendedName>
        <fullName evidence="1">Proline--tRNA ligase</fullName>
        <ecNumber evidence="1">6.1.1.15</ecNumber>
    </recommendedName>
    <alternativeName>
        <fullName evidence="1">Prolyl-tRNA synthetase</fullName>
        <shortName evidence="1">ProRS</shortName>
    </alternativeName>
</protein>